<dbReference type="EC" id="3.1.21.10" evidence="1"/>
<dbReference type="EMBL" id="CP000111">
    <property type="protein sequence ID" value="ABB50124.1"/>
    <property type="molecule type" value="Genomic_DNA"/>
</dbReference>
<dbReference type="RefSeq" id="WP_011376615.1">
    <property type="nucleotide sequence ID" value="NC_007577.1"/>
</dbReference>
<dbReference type="SMR" id="Q31AH1"/>
<dbReference type="STRING" id="74546.PMT9312_1065"/>
<dbReference type="KEGG" id="pmi:PMT9312_1065"/>
<dbReference type="eggNOG" id="COG0817">
    <property type="taxonomic scope" value="Bacteria"/>
</dbReference>
<dbReference type="HOGENOM" id="CLU_091257_3_1_3"/>
<dbReference type="OrthoDB" id="9805499at2"/>
<dbReference type="Proteomes" id="UP000002715">
    <property type="component" value="Chromosome"/>
</dbReference>
<dbReference type="GO" id="GO:0005737">
    <property type="term" value="C:cytoplasm"/>
    <property type="evidence" value="ECO:0007669"/>
    <property type="project" value="UniProtKB-SubCell"/>
</dbReference>
<dbReference type="GO" id="GO:0048476">
    <property type="term" value="C:Holliday junction resolvase complex"/>
    <property type="evidence" value="ECO:0007669"/>
    <property type="project" value="UniProtKB-UniRule"/>
</dbReference>
<dbReference type="GO" id="GO:0008821">
    <property type="term" value="F:crossover junction DNA endonuclease activity"/>
    <property type="evidence" value="ECO:0007669"/>
    <property type="project" value="UniProtKB-UniRule"/>
</dbReference>
<dbReference type="GO" id="GO:0003677">
    <property type="term" value="F:DNA binding"/>
    <property type="evidence" value="ECO:0007669"/>
    <property type="project" value="UniProtKB-KW"/>
</dbReference>
<dbReference type="GO" id="GO:0000287">
    <property type="term" value="F:magnesium ion binding"/>
    <property type="evidence" value="ECO:0007669"/>
    <property type="project" value="UniProtKB-UniRule"/>
</dbReference>
<dbReference type="GO" id="GO:0006310">
    <property type="term" value="P:DNA recombination"/>
    <property type="evidence" value="ECO:0007669"/>
    <property type="project" value="UniProtKB-UniRule"/>
</dbReference>
<dbReference type="GO" id="GO:0006281">
    <property type="term" value="P:DNA repair"/>
    <property type="evidence" value="ECO:0007669"/>
    <property type="project" value="UniProtKB-UniRule"/>
</dbReference>
<dbReference type="CDD" id="cd16962">
    <property type="entry name" value="RuvC"/>
    <property type="match status" value="1"/>
</dbReference>
<dbReference type="FunFam" id="3.30.420.10:FF:000002">
    <property type="entry name" value="Crossover junction endodeoxyribonuclease RuvC"/>
    <property type="match status" value="1"/>
</dbReference>
<dbReference type="Gene3D" id="3.30.420.10">
    <property type="entry name" value="Ribonuclease H-like superfamily/Ribonuclease H"/>
    <property type="match status" value="1"/>
</dbReference>
<dbReference type="HAMAP" id="MF_00034">
    <property type="entry name" value="RuvC"/>
    <property type="match status" value="1"/>
</dbReference>
<dbReference type="InterPro" id="IPR012337">
    <property type="entry name" value="RNaseH-like_sf"/>
</dbReference>
<dbReference type="InterPro" id="IPR036397">
    <property type="entry name" value="RNaseH_sf"/>
</dbReference>
<dbReference type="InterPro" id="IPR020563">
    <property type="entry name" value="X-over_junc_endoDNase_Mg_BS"/>
</dbReference>
<dbReference type="InterPro" id="IPR002176">
    <property type="entry name" value="X-over_junc_endoDNase_RuvC"/>
</dbReference>
<dbReference type="NCBIfam" id="NF000711">
    <property type="entry name" value="PRK00039.2-1"/>
    <property type="match status" value="1"/>
</dbReference>
<dbReference type="NCBIfam" id="TIGR00228">
    <property type="entry name" value="ruvC"/>
    <property type="match status" value="1"/>
</dbReference>
<dbReference type="PANTHER" id="PTHR30194">
    <property type="entry name" value="CROSSOVER JUNCTION ENDODEOXYRIBONUCLEASE RUVC"/>
    <property type="match status" value="1"/>
</dbReference>
<dbReference type="PANTHER" id="PTHR30194:SF3">
    <property type="entry name" value="CROSSOVER JUNCTION ENDODEOXYRIBONUCLEASE RUVC"/>
    <property type="match status" value="1"/>
</dbReference>
<dbReference type="Pfam" id="PF02075">
    <property type="entry name" value="RuvC"/>
    <property type="match status" value="1"/>
</dbReference>
<dbReference type="PRINTS" id="PR00696">
    <property type="entry name" value="RSOLVASERUVC"/>
</dbReference>
<dbReference type="SUPFAM" id="SSF53098">
    <property type="entry name" value="Ribonuclease H-like"/>
    <property type="match status" value="1"/>
</dbReference>
<dbReference type="PROSITE" id="PS01321">
    <property type="entry name" value="RUVC"/>
    <property type="match status" value="1"/>
</dbReference>
<accession>Q31AH1</accession>
<feature type="chain" id="PRO_1000002796" description="Crossover junction endodeoxyribonuclease RuvC">
    <location>
        <begin position="1"/>
        <end position="157"/>
    </location>
</feature>
<feature type="active site" evidence="1">
    <location>
        <position position="7"/>
    </location>
</feature>
<feature type="active site" evidence="1">
    <location>
        <position position="67"/>
    </location>
</feature>
<feature type="active site" evidence="1">
    <location>
        <position position="139"/>
    </location>
</feature>
<feature type="binding site" evidence="1">
    <location>
        <position position="7"/>
    </location>
    <ligand>
        <name>Mg(2+)</name>
        <dbReference type="ChEBI" id="CHEBI:18420"/>
        <label>1</label>
    </ligand>
</feature>
<feature type="binding site" evidence="1">
    <location>
        <position position="67"/>
    </location>
    <ligand>
        <name>Mg(2+)</name>
        <dbReference type="ChEBI" id="CHEBI:18420"/>
        <label>2</label>
    </ligand>
</feature>
<feature type="binding site" evidence="1">
    <location>
        <position position="139"/>
    </location>
    <ligand>
        <name>Mg(2+)</name>
        <dbReference type="ChEBI" id="CHEBI:18420"/>
        <label>1</label>
    </ligand>
</feature>
<organism>
    <name type="scientific">Prochlorococcus marinus (strain MIT 9312)</name>
    <dbReference type="NCBI Taxonomy" id="74546"/>
    <lineage>
        <taxon>Bacteria</taxon>
        <taxon>Bacillati</taxon>
        <taxon>Cyanobacteriota</taxon>
        <taxon>Cyanophyceae</taxon>
        <taxon>Synechococcales</taxon>
        <taxon>Prochlorococcaceae</taxon>
        <taxon>Prochlorococcus</taxon>
    </lineage>
</organism>
<gene>
    <name evidence="1" type="primary">ruvC</name>
    <name type="ordered locus">PMT9312_1065</name>
</gene>
<evidence type="ECO:0000255" key="1">
    <source>
        <dbReference type="HAMAP-Rule" id="MF_00034"/>
    </source>
</evidence>
<sequence>MRIIGIDPGLARVGYGIIEIKNDKKILLDCGVIETGKEKKEEDRLYEIFKDLNELISHWKPNLAAVEKFFFYRSSTTISVVQARGVIMMVLASKKINISEYSPAQIKLTIAGSGKASKKEVLDAVMYNLELNKPPKPDDSADALAIALTKLNEEGFN</sequence>
<reference key="1">
    <citation type="journal article" date="2006" name="Science">
        <title>Genomic islands and the ecology and evolution of Prochlorococcus.</title>
        <authorList>
            <person name="Coleman M.L."/>
            <person name="Sullivan M.B."/>
            <person name="Martiny A.C."/>
            <person name="Steglich C."/>
            <person name="Barry K."/>
            <person name="Delong E.F."/>
            <person name="Chisholm S.W."/>
        </authorList>
    </citation>
    <scope>NUCLEOTIDE SEQUENCE [LARGE SCALE GENOMIC DNA]</scope>
    <source>
        <strain>MIT 9312</strain>
    </source>
</reference>
<protein>
    <recommendedName>
        <fullName evidence="1">Crossover junction endodeoxyribonuclease RuvC</fullName>
        <ecNumber evidence="1">3.1.21.10</ecNumber>
    </recommendedName>
    <alternativeName>
        <fullName evidence="1">Holliday junction nuclease RuvC</fullName>
    </alternativeName>
    <alternativeName>
        <fullName evidence="1">Holliday junction resolvase RuvC</fullName>
    </alternativeName>
</protein>
<comment type="function">
    <text evidence="1">The RuvA-RuvB-RuvC complex processes Holliday junction (HJ) DNA during genetic recombination and DNA repair. Endonuclease that resolves HJ intermediates. Cleaves cruciform DNA by making single-stranded nicks across the HJ at symmetrical positions within the homologous arms, yielding a 5'-phosphate and a 3'-hydroxyl group; requires a central core of homology in the junction. The consensus cleavage sequence is 5'-(A/T)TT(C/G)-3'. Cleavage occurs on the 3'-side of the TT dinucleotide at the point of strand exchange. HJ branch migration catalyzed by RuvA-RuvB allows RuvC to scan DNA until it finds its consensus sequence, where it cleaves and resolves the cruciform DNA.</text>
</comment>
<comment type="catalytic activity">
    <reaction evidence="1">
        <text>Endonucleolytic cleavage at a junction such as a reciprocal single-stranded crossover between two homologous DNA duplexes (Holliday junction).</text>
        <dbReference type="EC" id="3.1.21.10"/>
    </reaction>
</comment>
<comment type="cofactor">
    <cofactor evidence="1">
        <name>Mg(2+)</name>
        <dbReference type="ChEBI" id="CHEBI:18420"/>
    </cofactor>
    <text evidence="1">Binds 2 Mg(2+) ion per subunit.</text>
</comment>
<comment type="subunit">
    <text evidence="1">Homodimer which binds Holliday junction (HJ) DNA. The HJ becomes 2-fold symmetrical on binding to RuvC with unstacked arms; it has a different conformation from HJ DNA in complex with RuvA. In the full resolvosome a probable DNA-RuvA(4)-RuvB(12)-RuvC(2) complex forms which resolves the HJ.</text>
</comment>
<comment type="subcellular location">
    <subcellularLocation>
        <location evidence="1">Cytoplasm</location>
    </subcellularLocation>
</comment>
<comment type="similarity">
    <text evidence="1">Belongs to the RuvC family.</text>
</comment>
<name>RUVC_PROM9</name>
<keyword id="KW-0963">Cytoplasm</keyword>
<keyword id="KW-0227">DNA damage</keyword>
<keyword id="KW-0233">DNA recombination</keyword>
<keyword id="KW-0234">DNA repair</keyword>
<keyword id="KW-0238">DNA-binding</keyword>
<keyword id="KW-0255">Endonuclease</keyword>
<keyword id="KW-0378">Hydrolase</keyword>
<keyword id="KW-0460">Magnesium</keyword>
<keyword id="KW-0479">Metal-binding</keyword>
<keyword id="KW-0540">Nuclease</keyword>
<proteinExistence type="inferred from homology"/>